<proteinExistence type="inferred from homology"/>
<reference key="1">
    <citation type="journal article" date="2010" name="Environ. Microbiol.">
        <title>The genome of Syntrophomonas wolfei: new insights into syntrophic metabolism and biohydrogen production.</title>
        <authorList>
            <person name="Sieber J.R."/>
            <person name="Sims D.R."/>
            <person name="Han C."/>
            <person name="Kim E."/>
            <person name="Lykidis A."/>
            <person name="Lapidus A.L."/>
            <person name="McDonnald E."/>
            <person name="Rohlin L."/>
            <person name="Culley D.E."/>
            <person name="Gunsalus R."/>
            <person name="McInerney M.J."/>
        </authorList>
    </citation>
    <scope>NUCLEOTIDE SEQUENCE [LARGE SCALE GENOMIC DNA]</scope>
    <source>
        <strain>DSM 2245B / Goettingen</strain>
    </source>
</reference>
<accession>Q0AYF8</accession>
<dbReference type="EC" id="6.1.1.17" evidence="1"/>
<dbReference type="EMBL" id="CP000448">
    <property type="protein sequence ID" value="ABI68246.1"/>
    <property type="molecule type" value="Genomic_DNA"/>
</dbReference>
<dbReference type="RefSeq" id="WP_011640351.1">
    <property type="nucleotide sequence ID" value="NC_008346.1"/>
</dbReference>
<dbReference type="SMR" id="Q0AYF8"/>
<dbReference type="STRING" id="335541.Swol_0930"/>
<dbReference type="KEGG" id="swo:Swol_0930"/>
<dbReference type="eggNOG" id="COG0008">
    <property type="taxonomic scope" value="Bacteria"/>
</dbReference>
<dbReference type="HOGENOM" id="CLU_015768_6_3_9"/>
<dbReference type="OrthoDB" id="9807503at2"/>
<dbReference type="Proteomes" id="UP000001968">
    <property type="component" value="Chromosome"/>
</dbReference>
<dbReference type="GO" id="GO:0005829">
    <property type="term" value="C:cytosol"/>
    <property type="evidence" value="ECO:0007669"/>
    <property type="project" value="TreeGrafter"/>
</dbReference>
<dbReference type="GO" id="GO:0005524">
    <property type="term" value="F:ATP binding"/>
    <property type="evidence" value="ECO:0007669"/>
    <property type="project" value="UniProtKB-UniRule"/>
</dbReference>
<dbReference type="GO" id="GO:0004818">
    <property type="term" value="F:glutamate-tRNA ligase activity"/>
    <property type="evidence" value="ECO:0007669"/>
    <property type="project" value="UniProtKB-UniRule"/>
</dbReference>
<dbReference type="GO" id="GO:0000049">
    <property type="term" value="F:tRNA binding"/>
    <property type="evidence" value="ECO:0007669"/>
    <property type="project" value="InterPro"/>
</dbReference>
<dbReference type="GO" id="GO:0008270">
    <property type="term" value="F:zinc ion binding"/>
    <property type="evidence" value="ECO:0007669"/>
    <property type="project" value="InterPro"/>
</dbReference>
<dbReference type="GO" id="GO:0006424">
    <property type="term" value="P:glutamyl-tRNA aminoacylation"/>
    <property type="evidence" value="ECO:0007669"/>
    <property type="project" value="UniProtKB-UniRule"/>
</dbReference>
<dbReference type="CDD" id="cd00808">
    <property type="entry name" value="GluRS_core"/>
    <property type="match status" value="1"/>
</dbReference>
<dbReference type="FunFam" id="3.40.50.620:FF:000045">
    <property type="entry name" value="Glutamate--tRNA ligase, mitochondrial"/>
    <property type="match status" value="1"/>
</dbReference>
<dbReference type="Gene3D" id="1.10.10.350">
    <property type="match status" value="1"/>
</dbReference>
<dbReference type="Gene3D" id="3.40.50.620">
    <property type="entry name" value="HUPs"/>
    <property type="match status" value="1"/>
</dbReference>
<dbReference type="HAMAP" id="MF_00022">
    <property type="entry name" value="Glu_tRNA_synth_type1"/>
    <property type="match status" value="1"/>
</dbReference>
<dbReference type="InterPro" id="IPR045462">
    <property type="entry name" value="aa-tRNA-synth_I_cd-bd"/>
</dbReference>
<dbReference type="InterPro" id="IPR020751">
    <property type="entry name" value="aa-tRNA-synth_I_codon-bd_sub2"/>
</dbReference>
<dbReference type="InterPro" id="IPR001412">
    <property type="entry name" value="aa-tRNA-synth_I_CS"/>
</dbReference>
<dbReference type="InterPro" id="IPR008925">
    <property type="entry name" value="aa_tRNA-synth_I_cd-bd_sf"/>
</dbReference>
<dbReference type="InterPro" id="IPR004527">
    <property type="entry name" value="Glu-tRNA-ligase_bac/mito"/>
</dbReference>
<dbReference type="InterPro" id="IPR000924">
    <property type="entry name" value="Glu/Gln-tRNA-synth"/>
</dbReference>
<dbReference type="InterPro" id="IPR020058">
    <property type="entry name" value="Glu/Gln-tRNA-synth_Ib_cat-dom"/>
</dbReference>
<dbReference type="InterPro" id="IPR049940">
    <property type="entry name" value="GluQ/Sye"/>
</dbReference>
<dbReference type="InterPro" id="IPR033910">
    <property type="entry name" value="GluRS_core"/>
</dbReference>
<dbReference type="InterPro" id="IPR014729">
    <property type="entry name" value="Rossmann-like_a/b/a_fold"/>
</dbReference>
<dbReference type="NCBIfam" id="TIGR00464">
    <property type="entry name" value="gltX_bact"/>
    <property type="match status" value="1"/>
</dbReference>
<dbReference type="PANTHER" id="PTHR43311">
    <property type="entry name" value="GLUTAMATE--TRNA LIGASE"/>
    <property type="match status" value="1"/>
</dbReference>
<dbReference type="PANTHER" id="PTHR43311:SF2">
    <property type="entry name" value="GLUTAMATE--TRNA LIGASE, MITOCHONDRIAL-RELATED"/>
    <property type="match status" value="1"/>
</dbReference>
<dbReference type="Pfam" id="PF19269">
    <property type="entry name" value="Anticodon_2"/>
    <property type="match status" value="1"/>
</dbReference>
<dbReference type="Pfam" id="PF00749">
    <property type="entry name" value="tRNA-synt_1c"/>
    <property type="match status" value="1"/>
</dbReference>
<dbReference type="PRINTS" id="PR00987">
    <property type="entry name" value="TRNASYNTHGLU"/>
</dbReference>
<dbReference type="SUPFAM" id="SSF48163">
    <property type="entry name" value="An anticodon-binding domain of class I aminoacyl-tRNA synthetases"/>
    <property type="match status" value="1"/>
</dbReference>
<dbReference type="SUPFAM" id="SSF52374">
    <property type="entry name" value="Nucleotidylyl transferase"/>
    <property type="match status" value="1"/>
</dbReference>
<dbReference type="PROSITE" id="PS00178">
    <property type="entry name" value="AA_TRNA_LIGASE_I"/>
    <property type="match status" value="1"/>
</dbReference>
<comment type="function">
    <text evidence="1">Catalyzes the attachment of glutamate to tRNA(Glu) in a two-step reaction: glutamate is first activated by ATP to form Glu-AMP and then transferred to the acceptor end of tRNA(Glu).</text>
</comment>
<comment type="catalytic activity">
    <reaction evidence="1">
        <text>tRNA(Glu) + L-glutamate + ATP = L-glutamyl-tRNA(Glu) + AMP + diphosphate</text>
        <dbReference type="Rhea" id="RHEA:23540"/>
        <dbReference type="Rhea" id="RHEA-COMP:9663"/>
        <dbReference type="Rhea" id="RHEA-COMP:9680"/>
        <dbReference type="ChEBI" id="CHEBI:29985"/>
        <dbReference type="ChEBI" id="CHEBI:30616"/>
        <dbReference type="ChEBI" id="CHEBI:33019"/>
        <dbReference type="ChEBI" id="CHEBI:78442"/>
        <dbReference type="ChEBI" id="CHEBI:78520"/>
        <dbReference type="ChEBI" id="CHEBI:456215"/>
        <dbReference type="EC" id="6.1.1.17"/>
    </reaction>
</comment>
<comment type="subunit">
    <text evidence="1">Monomer.</text>
</comment>
<comment type="subcellular location">
    <subcellularLocation>
        <location evidence="1">Cytoplasm</location>
    </subcellularLocation>
</comment>
<comment type="similarity">
    <text evidence="1">Belongs to the class-I aminoacyl-tRNA synthetase family. Glutamate--tRNA ligase type 1 subfamily.</text>
</comment>
<name>SYE1_SYNWW</name>
<organism>
    <name type="scientific">Syntrophomonas wolfei subsp. wolfei (strain DSM 2245B / Goettingen)</name>
    <dbReference type="NCBI Taxonomy" id="335541"/>
    <lineage>
        <taxon>Bacteria</taxon>
        <taxon>Bacillati</taxon>
        <taxon>Bacillota</taxon>
        <taxon>Clostridia</taxon>
        <taxon>Eubacteriales</taxon>
        <taxon>Syntrophomonadaceae</taxon>
        <taxon>Syntrophomonas</taxon>
    </lineage>
</organism>
<sequence length="495" mass="56202">MSNIRVRFAPSPTGALHMGGARTALFNWLFARQNGGKFILRIEDTDFRRSREDSAQGIVEGLSWLGLDWDEGPDIGGPLGPYRQSERGDIYSRYLQELLDSGQAYYCFCSPEDLQKEREEAAQEKRDYKYGGRCKALKPEEASEMLQAGKPAVIRLKVPLDGNTVVPDLIRGDVSFSNALFDDFIIAKSDGWPTYNFAVVVDDFSMQISHVLRAEEHLSNTPRQLLIYRALGLKEPAFAHLSMILAPDRSKLSKRHGAISVQEFENQGYLPEALVNYLALLGWSTGKDIDIWSREEMMREFSLEHISKSPAIYDLEKLAWMNGQYMMRLDIESLMALVEPQAQQQGWLNEDNFDYFQQAVELVRNRAKTRDELLDALGYFFEEVKQYDEKGVKKHFGQQKASTMLSEVLEIVSNMGSFSAAELEEAFRQRAQELKIKAADLIHPTRLALSGRTATPGLFELMEVLGQEKCISRLEKALDFIAKLTTHGPEGHNHR</sequence>
<evidence type="ECO:0000255" key="1">
    <source>
        <dbReference type="HAMAP-Rule" id="MF_00022"/>
    </source>
</evidence>
<keyword id="KW-0030">Aminoacyl-tRNA synthetase</keyword>
<keyword id="KW-0067">ATP-binding</keyword>
<keyword id="KW-0963">Cytoplasm</keyword>
<keyword id="KW-0436">Ligase</keyword>
<keyword id="KW-0547">Nucleotide-binding</keyword>
<keyword id="KW-0648">Protein biosynthesis</keyword>
<keyword id="KW-1185">Reference proteome</keyword>
<protein>
    <recommendedName>
        <fullName evidence="1">Glutamate--tRNA ligase 1</fullName>
        <ecNumber evidence="1">6.1.1.17</ecNumber>
    </recommendedName>
    <alternativeName>
        <fullName evidence="1">Glutamyl-tRNA synthetase 1</fullName>
        <shortName evidence="1">GluRS 1</shortName>
    </alternativeName>
</protein>
<feature type="chain" id="PRO_0000367779" description="Glutamate--tRNA ligase 1">
    <location>
        <begin position="1"/>
        <end position="495"/>
    </location>
</feature>
<feature type="short sequence motif" description="'HIGH' region" evidence="1">
    <location>
        <begin position="10"/>
        <end position="20"/>
    </location>
</feature>
<feature type="short sequence motif" description="'KMSKS' region" evidence="1">
    <location>
        <begin position="251"/>
        <end position="255"/>
    </location>
</feature>
<feature type="binding site" evidence="1">
    <location>
        <position position="254"/>
    </location>
    <ligand>
        <name>ATP</name>
        <dbReference type="ChEBI" id="CHEBI:30616"/>
    </ligand>
</feature>
<gene>
    <name evidence="1" type="primary">gltX1</name>
    <name type="ordered locus">Swol_0930</name>
</gene>